<name>GCSP_MYCTA</name>
<organism>
    <name type="scientific">Mycobacterium tuberculosis (strain ATCC 25177 / H37Ra)</name>
    <dbReference type="NCBI Taxonomy" id="419947"/>
    <lineage>
        <taxon>Bacteria</taxon>
        <taxon>Bacillati</taxon>
        <taxon>Actinomycetota</taxon>
        <taxon>Actinomycetes</taxon>
        <taxon>Mycobacteriales</taxon>
        <taxon>Mycobacteriaceae</taxon>
        <taxon>Mycobacterium</taxon>
        <taxon>Mycobacterium tuberculosis complex</taxon>
    </lineage>
</organism>
<sequence>MSDHSTFADRHIGLDSQAVATMLAVIGVDSLDDLAVKAVPAGILDTLTDTGAAPGLDSLPPAASEAEALAELRALADANTVAVSMIGQGYYDTHTPPVLLRNIIENPAWYTAYTPYQPEISQGRLEALLNFQTLVTDLTGLEIANASMLDEGTAAAEAMTLMHRAARGPVKRVVVDADVFTQTAAVLATRAKPLGIEIVTADLRAGLPDGEFFGVIAQLPGASGRITDWSALVQQAHDRGALVAVGADLLALTLIAPPGEIGADVAFGTTQRFGVPMGFGGPHAGYLAVHAKHARQLPGRLVGVSVDSDGTPAYRLALQTREQHIRRDKATSNICTAQVLLAVLAAMYASYHGAGGLTAIARRVHAHAEAIAGALGDALVHDKYFDTVLARVPGRADEVLARAKANGINLWRVDADHVSVACDEATTDTHVAVVLDAFGVAAAAPAHTDIATRTSEFLTHPAFTQYRTETSMMRYLRALADKDIALDRSMIPLGSCTMKLNAAAEMESITWPEFGRQHPFAPASDTAGLRQLVADLQSWLVLITGYDAVSLQPNAGSQGEYAGLLAIHEYHASRGEPHRDICLIPSSAHGTNAASAALAGMRVVVVDCHDNGDVDLDDLRAKVGEHAERLSALMITYPSTHGVYEHDIAEICAAVHDAGGQVYVDGANLNALVGLARPGKFGGDVSHLNLHKTFCIPHGGGGPGVGPVAVRAHLAPFLPGHPFAPELPKGYPVSSAPYGSASILPITWAYIRMMGAEGLRAASLTAITSANYIARRLDEYYPVLYTGENGMVAHECILDLRGITKLTGITVDDVAKRLADYGFHAPTMSFPVAGTLMVEPTESESLAEVDAFCEAMIGIRAEIDKVGAGEWPVDDNPLRGAPHTAQCLLASDWDHPYTREQAAYPLGTAFRPKVWPAVRRIDGAYGDRNLVCSCPPVEAFA</sequence>
<gene>
    <name evidence="1" type="primary">gcvP</name>
    <name type="ordered locus">MRA_1843</name>
</gene>
<reference key="1">
    <citation type="journal article" date="2008" name="PLoS ONE">
        <title>Genetic basis of virulence attenuation revealed by comparative genomic analysis of Mycobacterium tuberculosis strain H37Ra versus H37Rv.</title>
        <authorList>
            <person name="Zheng H."/>
            <person name="Lu L."/>
            <person name="Wang B."/>
            <person name="Pu S."/>
            <person name="Zhang X."/>
            <person name="Zhu G."/>
            <person name="Shi W."/>
            <person name="Zhang L."/>
            <person name="Wang H."/>
            <person name="Wang S."/>
            <person name="Zhao G."/>
            <person name="Zhang Y."/>
        </authorList>
    </citation>
    <scope>NUCLEOTIDE SEQUENCE [LARGE SCALE GENOMIC DNA]</scope>
    <source>
        <strain>ATCC 25177 / H37Ra</strain>
    </source>
</reference>
<evidence type="ECO:0000255" key="1">
    <source>
        <dbReference type="HAMAP-Rule" id="MF_00711"/>
    </source>
</evidence>
<dbReference type="EC" id="1.4.4.2" evidence="1"/>
<dbReference type="EMBL" id="CP000611">
    <property type="protein sequence ID" value="ABQ73599.1"/>
    <property type="molecule type" value="Genomic_DNA"/>
</dbReference>
<dbReference type="RefSeq" id="WP_003900418.1">
    <property type="nucleotide sequence ID" value="NZ_CP016972.1"/>
</dbReference>
<dbReference type="SMR" id="A5U3J9"/>
<dbReference type="KEGG" id="mra:MRA_1843"/>
<dbReference type="eggNOG" id="COG0403">
    <property type="taxonomic scope" value="Bacteria"/>
</dbReference>
<dbReference type="eggNOG" id="COG1003">
    <property type="taxonomic scope" value="Bacteria"/>
</dbReference>
<dbReference type="HOGENOM" id="CLU_004620_2_2_11"/>
<dbReference type="Proteomes" id="UP000001988">
    <property type="component" value="Chromosome"/>
</dbReference>
<dbReference type="GO" id="GO:0005829">
    <property type="term" value="C:cytosol"/>
    <property type="evidence" value="ECO:0007669"/>
    <property type="project" value="TreeGrafter"/>
</dbReference>
<dbReference type="GO" id="GO:0005960">
    <property type="term" value="C:glycine cleavage complex"/>
    <property type="evidence" value="ECO:0007669"/>
    <property type="project" value="TreeGrafter"/>
</dbReference>
<dbReference type="GO" id="GO:0016594">
    <property type="term" value="F:glycine binding"/>
    <property type="evidence" value="ECO:0007669"/>
    <property type="project" value="TreeGrafter"/>
</dbReference>
<dbReference type="GO" id="GO:0004375">
    <property type="term" value="F:glycine dehydrogenase (decarboxylating) activity"/>
    <property type="evidence" value="ECO:0007669"/>
    <property type="project" value="UniProtKB-EC"/>
</dbReference>
<dbReference type="GO" id="GO:0030170">
    <property type="term" value="F:pyridoxal phosphate binding"/>
    <property type="evidence" value="ECO:0007669"/>
    <property type="project" value="TreeGrafter"/>
</dbReference>
<dbReference type="GO" id="GO:0019464">
    <property type="term" value="P:glycine decarboxylation via glycine cleavage system"/>
    <property type="evidence" value="ECO:0007669"/>
    <property type="project" value="UniProtKB-UniRule"/>
</dbReference>
<dbReference type="CDD" id="cd00613">
    <property type="entry name" value="GDC-P"/>
    <property type="match status" value="2"/>
</dbReference>
<dbReference type="FunFam" id="3.90.1150.10:FF:000059">
    <property type="entry name" value="Glycine dehydrogenase (decarboxylating)"/>
    <property type="match status" value="1"/>
</dbReference>
<dbReference type="FunFam" id="3.40.640.10:FF:000005">
    <property type="entry name" value="Glycine dehydrogenase (decarboxylating), mitochondrial"/>
    <property type="match status" value="1"/>
</dbReference>
<dbReference type="FunFam" id="3.40.640.10:FF:000007">
    <property type="entry name" value="glycine dehydrogenase (Decarboxylating), mitochondrial"/>
    <property type="match status" value="1"/>
</dbReference>
<dbReference type="Gene3D" id="3.90.1150.10">
    <property type="entry name" value="Aspartate Aminotransferase, domain 1"/>
    <property type="match status" value="2"/>
</dbReference>
<dbReference type="Gene3D" id="3.40.640.10">
    <property type="entry name" value="Type I PLP-dependent aspartate aminotransferase-like (Major domain)"/>
    <property type="match status" value="2"/>
</dbReference>
<dbReference type="HAMAP" id="MF_00711">
    <property type="entry name" value="GcvP"/>
    <property type="match status" value="1"/>
</dbReference>
<dbReference type="InterPro" id="IPR003437">
    <property type="entry name" value="GcvP"/>
</dbReference>
<dbReference type="InterPro" id="IPR049316">
    <property type="entry name" value="GDC-P_C"/>
</dbReference>
<dbReference type="InterPro" id="IPR049315">
    <property type="entry name" value="GDC-P_N"/>
</dbReference>
<dbReference type="InterPro" id="IPR020581">
    <property type="entry name" value="GDC_P"/>
</dbReference>
<dbReference type="InterPro" id="IPR015424">
    <property type="entry name" value="PyrdxlP-dep_Trfase"/>
</dbReference>
<dbReference type="InterPro" id="IPR015421">
    <property type="entry name" value="PyrdxlP-dep_Trfase_major"/>
</dbReference>
<dbReference type="InterPro" id="IPR015422">
    <property type="entry name" value="PyrdxlP-dep_Trfase_small"/>
</dbReference>
<dbReference type="NCBIfam" id="TIGR00461">
    <property type="entry name" value="gcvP"/>
    <property type="match status" value="1"/>
</dbReference>
<dbReference type="PANTHER" id="PTHR11773:SF1">
    <property type="entry name" value="GLYCINE DEHYDROGENASE (DECARBOXYLATING), MITOCHONDRIAL"/>
    <property type="match status" value="1"/>
</dbReference>
<dbReference type="PANTHER" id="PTHR11773">
    <property type="entry name" value="GLYCINE DEHYDROGENASE, DECARBOXYLATING"/>
    <property type="match status" value="1"/>
</dbReference>
<dbReference type="Pfam" id="PF21478">
    <property type="entry name" value="GcvP2_C"/>
    <property type="match status" value="1"/>
</dbReference>
<dbReference type="Pfam" id="PF02347">
    <property type="entry name" value="GDC-P"/>
    <property type="match status" value="2"/>
</dbReference>
<dbReference type="SUPFAM" id="SSF53383">
    <property type="entry name" value="PLP-dependent transferases"/>
    <property type="match status" value="2"/>
</dbReference>
<proteinExistence type="inferred from homology"/>
<comment type="function">
    <text evidence="1">The glycine cleavage system catalyzes the degradation of glycine. The P protein binds the alpha-amino group of glycine through its pyridoxal phosphate cofactor; CO(2) is released and the remaining methylamine moiety is then transferred to the lipoamide cofactor of the H protein.</text>
</comment>
<comment type="catalytic activity">
    <reaction evidence="1">
        <text>N(6)-[(R)-lipoyl]-L-lysyl-[glycine-cleavage complex H protein] + glycine + H(+) = N(6)-[(R)-S(8)-aminomethyldihydrolipoyl]-L-lysyl-[glycine-cleavage complex H protein] + CO2</text>
        <dbReference type="Rhea" id="RHEA:24304"/>
        <dbReference type="Rhea" id="RHEA-COMP:10494"/>
        <dbReference type="Rhea" id="RHEA-COMP:10495"/>
        <dbReference type="ChEBI" id="CHEBI:15378"/>
        <dbReference type="ChEBI" id="CHEBI:16526"/>
        <dbReference type="ChEBI" id="CHEBI:57305"/>
        <dbReference type="ChEBI" id="CHEBI:83099"/>
        <dbReference type="ChEBI" id="CHEBI:83143"/>
        <dbReference type="EC" id="1.4.4.2"/>
    </reaction>
</comment>
<comment type="cofactor">
    <cofactor evidence="1">
        <name>pyridoxal 5'-phosphate</name>
        <dbReference type="ChEBI" id="CHEBI:597326"/>
    </cofactor>
</comment>
<comment type="subunit">
    <text evidence="1">The glycine cleavage system is composed of four proteins: P, T, L and H.</text>
</comment>
<comment type="similarity">
    <text evidence="1">Belongs to the GcvP family.</text>
</comment>
<protein>
    <recommendedName>
        <fullName evidence="1">Glycine dehydrogenase (decarboxylating)</fullName>
        <ecNumber evidence="1">1.4.4.2</ecNumber>
    </recommendedName>
    <alternativeName>
        <fullName evidence="1">Glycine cleavage system P-protein</fullName>
    </alternativeName>
    <alternativeName>
        <fullName evidence="1">Glycine decarboxylase</fullName>
    </alternativeName>
    <alternativeName>
        <fullName evidence="1">Glycine dehydrogenase (aminomethyl-transferring)</fullName>
    </alternativeName>
</protein>
<accession>A5U3J9</accession>
<keyword id="KW-0560">Oxidoreductase</keyword>
<keyword id="KW-0663">Pyridoxal phosphate</keyword>
<keyword id="KW-1185">Reference proteome</keyword>
<feature type="chain" id="PRO_1000045591" description="Glycine dehydrogenase (decarboxylating)">
    <location>
        <begin position="1"/>
        <end position="941"/>
    </location>
</feature>
<feature type="modified residue" description="N6-(pyridoxal phosphate)lysine" evidence="1">
    <location>
        <position position="692"/>
    </location>
</feature>